<accession>A1BA38</accession>
<organism>
    <name type="scientific">Paracoccus denitrificans (strain Pd 1222)</name>
    <dbReference type="NCBI Taxonomy" id="318586"/>
    <lineage>
        <taxon>Bacteria</taxon>
        <taxon>Pseudomonadati</taxon>
        <taxon>Pseudomonadota</taxon>
        <taxon>Alphaproteobacteria</taxon>
        <taxon>Rhodobacterales</taxon>
        <taxon>Paracoccaceae</taxon>
        <taxon>Paracoccus</taxon>
    </lineage>
</organism>
<keyword id="KW-0997">Cell inner membrane</keyword>
<keyword id="KW-1003">Cell membrane</keyword>
<keyword id="KW-0186">Copper</keyword>
<keyword id="KW-0472">Membrane</keyword>
<keyword id="KW-1185">Reference proteome</keyword>
<keyword id="KW-0735">Signal-anchor</keyword>
<keyword id="KW-0812">Transmembrane</keyword>
<keyword id="KW-1133">Transmembrane helix</keyword>
<evidence type="ECO:0000255" key="1">
    <source>
        <dbReference type="HAMAP-Rule" id="MF_00155"/>
    </source>
</evidence>
<comment type="function">
    <text evidence="1">Exerts its effect at some terminal stage of cytochrome c oxidase synthesis, probably by being involved in the insertion of the copper B into subunit I.</text>
</comment>
<comment type="subcellular location">
    <subcellularLocation>
        <location evidence="1">Cell inner membrane</location>
        <topology evidence="1">Single-pass type II membrane protein</topology>
        <orientation evidence="1">Periplasmic side</orientation>
    </subcellularLocation>
</comment>
<comment type="similarity">
    <text evidence="1">Belongs to the COX11/CtaG family.</text>
</comment>
<name>COXZ_PARDP</name>
<dbReference type="EMBL" id="CP000490">
    <property type="protein sequence ID" value="ABL72382.1"/>
    <property type="molecule type" value="Genomic_DNA"/>
</dbReference>
<dbReference type="RefSeq" id="WP_011750544.1">
    <property type="nucleotide sequence ID" value="NC_008687.1"/>
</dbReference>
<dbReference type="SMR" id="A1BA38"/>
<dbReference type="STRING" id="318586.Pden_4318"/>
<dbReference type="EnsemblBacteria" id="ABL72382">
    <property type="protein sequence ID" value="ABL72382"/>
    <property type="gene ID" value="Pden_4318"/>
</dbReference>
<dbReference type="GeneID" id="93453984"/>
<dbReference type="KEGG" id="pde:Pden_4318"/>
<dbReference type="eggNOG" id="COG3175">
    <property type="taxonomic scope" value="Bacteria"/>
</dbReference>
<dbReference type="HOGENOM" id="CLU_045000_5_0_5"/>
<dbReference type="OrthoDB" id="9804841at2"/>
<dbReference type="Proteomes" id="UP000000361">
    <property type="component" value="Chromosome 2"/>
</dbReference>
<dbReference type="GO" id="GO:0005886">
    <property type="term" value="C:plasma membrane"/>
    <property type="evidence" value="ECO:0007669"/>
    <property type="project" value="UniProtKB-SubCell"/>
</dbReference>
<dbReference type="GO" id="GO:0005507">
    <property type="term" value="F:copper ion binding"/>
    <property type="evidence" value="ECO:0007669"/>
    <property type="project" value="InterPro"/>
</dbReference>
<dbReference type="GO" id="GO:0008535">
    <property type="term" value="P:respiratory chain complex IV assembly"/>
    <property type="evidence" value="ECO:0007669"/>
    <property type="project" value="UniProtKB-UniRule"/>
</dbReference>
<dbReference type="FunFam" id="2.60.370.10:FF:000001">
    <property type="entry name" value="COX11 cytochrome c oxidase assembly homolog"/>
    <property type="match status" value="1"/>
</dbReference>
<dbReference type="Gene3D" id="2.60.370.10">
    <property type="entry name" value="Ctag/Cox11"/>
    <property type="match status" value="1"/>
</dbReference>
<dbReference type="HAMAP" id="MF_00155">
    <property type="entry name" value="CtaG"/>
    <property type="match status" value="1"/>
</dbReference>
<dbReference type="InterPro" id="IPR023471">
    <property type="entry name" value="CtaG/Cox11_dom_sf"/>
</dbReference>
<dbReference type="InterPro" id="IPR007533">
    <property type="entry name" value="Cyt_c_oxidase_assmbl_CtaG"/>
</dbReference>
<dbReference type="NCBIfam" id="NF003465">
    <property type="entry name" value="PRK05089.1"/>
    <property type="match status" value="1"/>
</dbReference>
<dbReference type="PANTHER" id="PTHR21320:SF3">
    <property type="entry name" value="CYTOCHROME C OXIDASE ASSEMBLY PROTEIN COX11, MITOCHONDRIAL-RELATED"/>
    <property type="match status" value="1"/>
</dbReference>
<dbReference type="PANTHER" id="PTHR21320">
    <property type="entry name" value="CYTOCHROME C OXIDASE ASSEMBLY PROTEIN COX11-RELATED"/>
    <property type="match status" value="1"/>
</dbReference>
<dbReference type="Pfam" id="PF04442">
    <property type="entry name" value="CtaG_Cox11"/>
    <property type="match status" value="1"/>
</dbReference>
<dbReference type="PIRSF" id="PIRSF005413">
    <property type="entry name" value="COX11"/>
    <property type="match status" value="1"/>
</dbReference>
<dbReference type="SUPFAM" id="SSF110111">
    <property type="entry name" value="Ctag/Cox11"/>
    <property type="match status" value="1"/>
</dbReference>
<sequence length="195" mass="21439">MSGGKPRSNTRTVAMLAGVVVLMGALSWAAVPFYSWFCKVTGFAGTTNVAEAASDTVLDEKIRVRFDANADSNLGWTFRPMQREMELKIGENAIAFYEAINNTDEPVTGTASYNVAPDAAGYFFNKIECFCFTEQTLQPGERVEMPVSFFVDADLVNDRDAGRIRDITLSYTFHRTDPPAPKQAALDAKTEPTVN</sequence>
<gene>
    <name evidence="1" type="primary">ctaG</name>
    <name type="ordered locus">Pden_4318</name>
</gene>
<proteinExistence type="inferred from homology"/>
<feature type="chain" id="PRO_0000311203" description="Cytochrome c oxidase assembly protein CtaG">
    <location>
        <begin position="1"/>
        <end position="195"/>
    </location>
</feature>
<feature type="topological domain" description="Cytoplasmic" evidence="1">
    <location>
        <begin position="1"/>
        <end position="7"/>
    </location>
</feature>
<feature type="transmembrane region" description="Helical; Signal-anchor for type II membrane protein" evidence="1">
    <location>
        <begin position="8"/>
        <end position="30"/>
    </location>
</feature>
<feature type="topological domain" description="Periplasmic" evidence="1">
    <location>
        <begin position="31"/>
        <end position="195"/>
    </location>
</feature>
<reference key="1">
    <citation type="submission" date="2006-12" db="EMBL/GenBank/DDBJ databases">
        <title>Complete sequence of chromosome 2 of Paracoccus denitrificans PD1222.</title>
        <authorList>
            <person name="Copeland A."/>
            <person name="Lucas S."/>
            <person name="Lapidus A."/>
            <person name="Barry K."/>
            <person name="Detter J.C."/>
            <person name="Glavina del Rio T."/>
            <person name="Hammon N."/>
            <person name="Israni S."/>
            <person name="Dalin E."/>
            <person name="Tice H."/>
            <person name="Pitluck S."/>
            <person name="Munk A.C."/>
            <person name="Brettin T."/>
            <person name="Bruce D."/>
            <person name="Han C."/>
            <person name="Tapia R."/>
            <person name="Gilna P."/>
            <person name="Schmutz J."/>
            <person name="Larimer F."/>
            <person name="Land M."/>
            <person name="Hauser L."/>
            <person name="Kyrpides N."/>
            <person name="Lykidis A."/>
            <person name="Spiro S."/>
            <person name="Richardson D.J."/>
            <person name="Moir J.W.B."/>
            <person name="Ferguson S.J."/>
            <person name="van Spanning R.J.M."/>
            <person name="Richardson P."/>
        </authorList>
    </citation>
    <scope>NUCLEOTIDE SEQUENCE [LARGE SCALE GENOMIC DNA]</scope>
    <source>
        <strain>Pd 1222</strain>
    </source>
</reference>
<protein>
    <recommendedName>
        <fullName evidence="1">Cytochrome c oxidase assembly protein CtaG</fullName>
    </recommendedName>
</protein>